<sequence>MASAKEIKTKIASVKNTQKITSAMEMVAASKMRRAQERMAASRPYAENMRKVIGHVAQGTLEYKHPYLEVRDAKRVGYIVVATDRGLCGGLNVNLFKKVVSDVKKWKEQGADVEFCPIGARSVQFFKSFGGEVSAHASGLGDAPKLADLIGTVRVMLKAYNEGKLDRLYIVFNKFVNTMTQTPVIEQLLPLPKSDEEVASYPWDYIYEPDPKEVLDLLLTRYVESQVYQGVVENIASEQAARMVAMKAATDNAGEMIDDLQLVYNKARQAAITQELSEIVSGAAAV</sequence>
<dbReference type="EMBL" id="CP000447">
    <property type="protein sequence ID" value="ABI73871.1"/>
    <property type="molecule type" value="Genomic_DNA"/>
</dbReference>
<dbReference type="RefSeq" id="WP_011639451.1">
    <property type="nucleotide sequence ID" value="NC_008345.1"/>
</dbReference>
<dbReference type="SMR" id="Q07VU3"/>
<dbReference type="STRING" id="318167.Sfri_4046"/>
<dbReference type="KEGG" id="sfr:Sfri_4046"/>
<dbReference type="eggNOG" id="COG0224">
    <property type="taxonomic scope" value="Bacteria"/>
</dbReference>
<dbReference type="HOGENOM" id="CLU_050669_0_1_6"/>
<dbReference type="OrthoDB" id="9812769at2"/>
<dbReference type="Proteomes" id="UP000000684">
    <property type="component" value="Chromosome"/>
</dbReference>
<dbReference type="GO" id="GO:0005886">
    <property type="term" value="C:plasma membrane"/>
    <property type="evidence" value="ECO:0007669"/>
    <property type="project" value="UniProtKB-SubCell"/>
</dbReference>
<dbReference type="GO" id="GO:0045259">
    <property type="term" value="C:proton-transporting ATP synthase complex"/>
    <property type="evidence" value="ECO:0007669"/>
    <property type="project" value="UniProtKB-KW"/>
</dbReference>
<dbReference type="GO" id="GO:0005524">
    <property type="term" value="F:ATP binding"/>
    <property type="evidence" value="ECO:0007669"/>
    <property type="project" value="UniProtKB-UniRule"/>
</dbReference>
<dbReference type="GO" id="GO:0046933">
    <property type="term" value="F:proton-transporting ATP synthase activity, rotational mechanism"/>
    <property type="evidence" value="ECO:0007669"/>
    <property type="project" value="UniProtKB-UniRule"/>
</dbReference>
<dbReference type="GO" id="GO:0042777">
    <property type="term" value="P:proton motive force-driven plasma membrane ATP synthesis"/>
    <property type="evidence" value="ECO:0007669"/>
    <property type="project" value="UniProtKB-UniRule"/>
</dbReference>
<dbReference type="CDD" id="cd12151">
    <property type="entry name" value="F1-ATPase_gamma"/>
    <property type="match status" value="1"/>
</dbReference>
<dbReference type="FunFam" id="1.10.287.80:FF:000005">
    <property type="entry name" value="ATP synthase gamma chain"/>
    <property type="match status" value="2"/>
</dbReference>
<dbReference type="FunFam" id="3.40.1380.10:FF:000001">
    <property type="entry name" value="ATP synthase gamma chain"/>
    <property type="match status" value="1"/>
</dbReference>
<dbReference type="Gene3D" id="3.40.1380.10">
    <property type="match status" value="1"/>
</dbReference>
<dbReference type="Gene3D" id="1.10.287.80">
    <property type="entry name" value="ATP synthase, gamma subunit, helix hairpin domain"/>
    <property type="match status" value="1"/>
</dbReference>
<dbReference type="HAMAP" id="MF_00815">
    <property type="entry name" value="ATP_synth_gamma_bact"/>
    <property type="match status" value="1"/>
</dbReference>
<dbReference type="InterPro" id="IPR035968">
    <property type="entry name" value="ATP_synth_F1_ATPase_gsu"/>
</dbReference>
<dbReference type="InterPro" id="IPR000131">
    <property type="entry name" value="ATP_synth_F1_gsu"/>
</dbReference>
<dbReference type="InterPro" id="IPR023632">
    <property type="entry name" value="ATP_synth_F1_gsu_CS"/>
</dbReference>
<dbReference type="NCBIfam" id="TIGR01146">
    <property type="entry name" value="ATPsyn_F1gamma"/>
    <property type="match status" value="1"/>
</dbReference>
<dbReference type="NCBIfam" id="NF004144">
    <property type="entry name" value="PRK05621.1-1"/>
    <property type="match status" value="1"/>
</dbReference>
<dbReference type="PANTHER" id="PTHR11693">
    <property type="entry name" value="ATP SYNTHASE GAMMA CHAIN"/>
    <property type="match status" value="1"/>
</dbReference>
<dbReference type="PANTHER" id="PTHR11693:SF22">
    <property type="entry name" value="ATP SYNTHASE SUBUNIT GAMMA, MITOCHONDRIAL"/>
    <property type="match status" value="1"/>
</dbReference>
<dbReference type="Pfam" id="PF00231">
    <property type="entry name" value="ATP-synt"/>
    <property type="match status" value="1"/>
</dbReference>
<dbReference type="PRINTS" id="PR00126">
    <property type="entry name" value="ATPASEGAMMA"/>
</dbReference>
<dbReference type="SUPFAM" id="SSF52943">
    <property type="entry name" value="ATP synthase (F1-ATPase), gamma subunit"/>
    <property type="match status" value="1"/>
</dbReference>
<dbReference type="PROSITE" id="PS00153">
    <property type="entry name" value="ATPASE_GAMMA"/>
    <property type="match status" value="1"/>
</dbReference>
<name>ATPG_SHEFN</name>
<keyword id="KW-0066">ATP synthesis</keyword>
<keyword id="KW-0997">Cell inner membrane</keyword>
<keyword id="KW-1003">Cell membrane</keyword>
<keyword id="KW-0139">CF(1)</keyword>
<keyword id="KW-0375">Hydrogen ion transport</keyword>
<keyword id="KW-0406">Ion transport</keyword>
<keyword id="KW-0472">Membrane</keyword>
<keyword id="KW-1185">Reference proteome</keyword>
<keyword id="KW-0813">Transport</keyword>
<reference key="1">
    <citation type="submission" date="2006-08" db="EMBL/GenBank/DDBJ databases">
        <title>Complete sequence of Shewanella frigidimarina NCIMB 400.</title>
        <authorList>
            <consortium name="US DOE Joint Genome Institute"/>
            <person name="Copeland A."/>
            <person name="Lucas S."/>
            <person name="Lapidus A."/>
            <person name="Barry K."/>
            <person name="Detter J.C."/>
            <person name="Glavina del Rio T."/>
            <person name="Hammon N."/>
            <person name="Israni S."/>
            <person name="Dalin E."/>
            <person name="Tice H."/>
            <person name="Pitluck S."/>
            <person name="Fredrickson J.K."/>
            <person name="Kolker E."/>
            <person name="McCuel L.A."/>
            <person name="DiChristina T."/>
            <person name="Nealson K.H."/>
            <person name="Newman D."/>
            <person name="Tiedje J.M."/>
            <person name="Zhou J."/>
            <person name="Romine M.F."/>
            <person name="Culley D.E."/>
            <person name="Serres M."/>
            <person name="Chertkov O."/>
            <person name="Brettin T."/>
            <person name="Bruce D."/>
            <person name="Han C."/>
            <person name="Tapia R."/>
            <person name="Gilna P."/>
            <person name="Schmutz J."/>
            <person name="Larimer F."/>
            <person name="Land M."/>
            <person name="Hauser L."/>
            <person name="Kyrpides N."/>
            <person name="Mikhailova N."/>
            <person name="Richardson P."/>
        </authorList>
    </citation>
    <scope>NUCLEOTIDE SEQUENCE [LARGE SCALE GENOMIC DNA]</scope>
    <source>
        <strain>NCIMB 400</strain>
    </source>
</reference>
<accession>Q07VU3</accession>
<gene>
    <name evidence="1" type="primary">atpG</name>
    <name type="ordered locus">Sfri_4046</name>
</gene>
<evidence type="ECO:0000255" key="1">
    <source>
        <dbReference type="HAMAP-Rule" id="MF_00815"/>
    </source>
</evidence>
<protein>
    <recommendedName>
        <fullName evidence="1">ATP synthase gamma chain</fullName>
    </recommendedName>
    <alternativeName>
        <fullName evidence="1">ATP synthase F1 sector gamma subunit</fullName>
    </alternativeName>
    <alternativeName>
        <fullName evidence="1">F-ATPase gamma subunit</fullName>
    </alternativeName>
</protein>
<comment type="function">
    <text evidence="1">Produces ATP from ADP in the presence of a proton gradient across the membrane. The gamma chain is believed to be important in regulating ATPase activity and the flow of protons through the CF(0) complex.</text>
</comment>
<comment type="subunit">
    <text evidence="1">F-type ATPases have 2 components, CF(1) - the catalytic core - and CF(0) - the membrane proton channel. CF(1) has five subunits: alpha(3), beta(3), gamma(1), delta(1), epsilon(1). CF(0) has three main subunits: a, b and c.</text>
</comment>
<comment type="subcellular location">
    <subcellularLocation>
        <location evidence="1">Cell inner membrane</location>
        <topology evidence="1">Peripheral membrane protein</topology>
    </subcellularLocation>
</comment>
<comment type="similarity">
    <text evidence="1">Belongs to the ATPase gamma chain family.</text>
</comment>
<organism>
    <name type="scientific">Shewanella frigidimarina (strain NCIMB 400)</name>
    <dbReference type="NCBI Taxonomy" id="318167"/>
    <lineage>
        <taxon>Bacteria</taxon>
        <taxon>Pseudomonadati</taxon>
        <taxon>Pseudomonadota</taxon>
        <taxon>Gammaproteobacteria</taxon>
        <taxon>Alteromonadales</taxon>
        <taxon>Shewanellaceae</taxon>
        <taxon>Shewanella</taxon>
    </lineage>
</organism>
<feature type="chain" id="PRO_1000053328" description="ATP synthase gamma chain">
    <location>
        <begin position="1"/>
        <end position="286"/>
    </location>
</feature>
<proteinExistence type="inferred from homology"/>